<organism>
    <name type="scientific">Pongo abelii</name>
    <name type="common">Sumatran orangutan</name>
    <name type="synonym">Pongo pygmaeus abelii</name>
    <dbReference type="NCBI Taxonomy" id="9601"/>
    <lineage>
        <taxon>Eukaryota</taxon>
        <taxon>Metazoa</taxon>
        <taxon>Chordata</taxon>
        <taxon>Craniata</taxon>
        <taxon>Vertebrata</taxon>
        <taxon>Euteleostomi</taxon>
        <taxon>Mammalia</taxon>
        <taxon>Eutheria</taxon>
        <taxon>Euarchontoglires</taxon>
        <taxon>Primates</taxon>
        <taxon>Haplorrhini</taxon>
        <taxon>Catarrhini</taxon>
        <taxon>Hominidae</taxon>
        <taxon>Pongo</taxon>
    </lineage>
</organism>
<keyword id="KW-0025">Alternative splicing</keyword>
<keyword id="KW-0053">Apoptosis</keyword>
<keyword id="KW-0130">Cell adhesion</keyword>
<keyword id="KW-1003">Cell membrane</keyword>
<keyword id="KW-0966">Cell projection</keyword>
<keyword id="KW-0256">Endoplasmic reticulum</keyword>
<keyword id="KW-0967">Endosome</keyword>
<keyword id="KW-0333">Golgi apparatus</keyword>
<keyword id="KW-0378">Hydrolase</keyword>
<keyword id="KW-0472">Membrane</keyword>
<keyword id="KW-0914">Notch signaling pathway</keyword>
<keyword id="KW-0597">Phosphoprotein</keyword>
<keyword id="KW-0645">Protease</keyword>
<keyword id="KW-1185">Reference proteome</keyword>
<keyword id="KW-0770">Synapse</keyword>
<keyword id="KW-0812">Transmembrane</keyword>
<keyword id="KW-1133">Transmembrane helix</keyword>
<reference key="1">
    <citation type="submission" date="2004-11" db="EMBL/GenBank/DDBJ databases">
        <authorList>
            <consortium name="The German cDNA consortium"/>
        </authorList>
    </citation>
    <scope>NUCLEOTIDE SEQUENCE [LARGE SCALE MRNA] (ISOFORMS I-463 AND I-467)</scope>
    <source>
        <tissue>Kidney</tissue>
    </source>
</reference>
<name>PSN1_PONAB</name>
<feature type="chain" id="PRO_0000236059" description="Presenilin-1 NTF subunit" evidence="1">
    <location>
        <begin position="1"/>
        <end position="298"/>
    </location>
</feature>
<feature type="chain" id="PRO_0000236060" description="Presenilin-1 CTF subunit" evidence="1">
    <location>
        <begin position="299"/>
        <end position="467"/>
    </location>
</feature>
<feature type="chain" id="PRO_0000236061" description="Presenilin-1 CTF12">
    <location>
        <begin position="346"/>
        <end position="467"/>
    </location>
</feature>
<feature type="topological domain" description="Cytoplasmic" evidence="2">
    <location>
        <begin position="1"/>
        <end position="82"/>
    </location>
</feature>
<feature type="transmembrane region" description="Helical" evidence="2">
    <location>
        <begin position="83"/>
        <end position="103"/>
    </location>
</feature>
<feature type="topological domain" description="Lumenal" evidence="2">
    <location>
        <begin position="104"/>
        <end position="132"/>
    </location>
</feature>
<feature type="transmembrane region" description="Helical" evidence="2">
    <location>
        <begin position="133"/>
        <end position="153"/>
    </location>
</feature>
<feature type="topological domain" description="Cytoplasmic" evidence="2">
    <location>
        <begin position="154"/>
        <end position="166"/>
    </location>
</feature>
<feature type="transmembrane region" description="Helical" evidence="2">
    <location>
        <begin position="167"/>
        <end position="189"/>
    </location>
</feature>
<feature type="topological domain" description="Lumenal" evidence="2">
    <location>
        <begin position="190"/>
        <end position="194"/>
    </location>
</feature>
<feature type="transmembrane region" description="Helical" evidence="2">
    <location>
        <begin position="195"/>
        <end position="216"/>
    </location>
</feature>
<feature type="topological domain" description="Cytoplasmic" evidence="2">
    <location>
        <begin position="217"/>
        <end position="220"/>
    </location>
</feature>
<feature type="transmembrane region" description="Helical" evidence="2">
    <location>
        <begin position="221"/>
        <end position="241"/>
    </location>
</feature>
<feature type="topological domain" description="Lumenal" evidence="2">
    <location>
        <begin position="242"/>
        <end position="248"/>
    </location>
</feature>
<feature type="transmembrane region" description="Helical" evidence="2">
    <location>
        <begin position="249"/>
        <end position="272"/>
    </location>
</feature>
<feature type="topological domain" description="Cytoplasmic" evidence="2">
    <location>
        <begin position="273"/>
        <end position="380"/>
    </location>
</feature>
<feature type="transmembrane region" description="Helical" evidence="2">
    <location>
        <begin position="381"/>
        <end position="401"/>
    </location>
</feature>
<feature type="topological domain" description="Lumenal" evidence="2">
    <location>
        <begin position="402"/>
        <end position="407"/>
    </location>
</feature>
<feature type="transmembrane region" description="Helical" evidence="2">
    <location>
        <begin position="408"/>
        <end position="428"/>
    </location>
</feature>
<feature type="topological domain" description="Cytoplasmic" evidence="2">
    <location>
        <begin position="429"/>
        <end position="432"/>
    </location>
</feature>
<feature type="transmembrane region" description="Helical" evidence="2">
    <location>
        <begin position="433"/>
        <end position="453"/>
    </location>
</feature>
<feature type="topological domain" description="Lumenal" evidence="2">
    <location>
        <begin position="454"/>
        <end position="467"/>
    </location>
</feature>
<feature type="region of interest" description="Disordered" evidence="6">
    <location>
        <begin position="1"/>
        <end position="67"/>
    </location>
</feature>
<feature type="region of interest" description="Important for cleavage of target proteins" evidence="2">
    <location>
        <begin position="288"/>
        <end position="290"/>
    </location>
</feature>
<feature type="region of interest" description="Disordered" evidence="6">
    <location>
        <begin position="307"/>
        <end position="333"/>
    </location>
</feature>
<feature type="region of interest" description="Required for interaction with CTNNB1" evidence="2">
    <location>
        <begin position="322"/>
        <end position="450"/>
    </location>
</feature>
<feature type="region of interest" description="Required for interaction with CTNND2" evidence="2">
    <location>
        <begin position="372"/>
        <end position="399"/>
    </location>
</feature>
<feature type="region of interest" description="Important for cleavage of target proteins" evidence="2">
    <location>
        <begin position="377"/>
        <end position="381"/>
    </location>
</feature>
<feature type="region of interest" description="Important for cleavage of target proteins" evidence="2">
    <location>
        <begin position="432"/>
        <end position="434"/>
    </location>
</feature>
<feature type="region of interest" description="Interaction with MTCH1" evidence="2">
    <location>
        <begin position="464"/>
        <end position="467"/>
    </location>
</feature>
<feature type="short sequence motif" description="PAL" evidence="8">
    <location>
        <begin position="433"/>
        <end position="435"/>
    </location>
</feature>
<feature type="compositionally biased region" description="Polar residues" evidence="6">
    <location>
        <begin position="10"/>
        <end position="29"/>
    </location>
</feature>
<feature type="compositionally biased region" description="Basic and acidic residues" evidence="6">
    <location>
        <begin position="30"/>
        <end position="45"/>
    </location>
</feature>
<feature type="active site" evidence="2">
    <location>
        <position position="257"/>
    </location>
</feature>
<feature type="active site" evidence="2">
    <location>
        <position position="385"/>
    </location>
</feature>
<feature type="site" description="Cleavage; alternate" evidence="2">
    <location>
        <begin position="291"/>
        <end position="292"/>
    </location>
</feature>
<feature type="site" description="Cleavage; alternate" evidence="2">
    <location>
        <begin position="292"/>
        <end position="293"/>
    </location>
</feature>
<feature type="site" description="Cleavage" evidence="2">
    <location>
        <begin position="298"/>
        <end position="299"/>
    </location>
</feature>
<feature type="site" description="Cleavage; by caspase" evidence="2">
    <location>
        <begin position="345"/>
        <end position="346"/>
    </location>
</feature>
<feature type="modified residue" description="Phosphoserine" evidence="2">
    <location>
        <position position="43"/>
    </location>
</feature>
<feature type="modified residue" description="Phosphoserine" evidence="4">
    <location>
        <position position="51"/>
    </location>
</feature>
<feature type="modified residue" description="Phosphoserine; by PKA" evidence="2">
    <location>
        <position position="310"/>
    </location>
</feature>
<feature type="modified residue" description="Phosphoserine; by PKC" evidence="2">
    <location>
        <position position="346"/>
    </location>
</feature>
<feature type="modified residue" description="Phosphoserine" evidence="2">
    <location>
        <position position="367"/>
    </location>
</feature>
<feature type="splice variant" id="VSP_018570" description="In isoform I-463." evidence="7">
    <location>
        <begin position="26"/>
        <end position="29"/>
    </location>
</feature>
<protein>
    <recommendedName>
        <fullName>Presenilin-1</fullName>
        <shortName>PS-1</shortName>
        <ecNumber>3.4.23.-</ecNumber>
    </recommendedName>
    <component>
        <recommendedName>
            <fullName>Presenilin-1 NTF subunit</fullName>
        </recommendedName>
    </component>
    <component>
        <recommendedName>
            <fullName>Presenilin-1 CTF subunit</fullName>
        </recommendedName>
    </component>
    <component>
        <recommendedName>
            <fullName>Presenilin-1 CTF12</fullName>
            <shortName>PS1-CTF12</shortName>
        </recommendedName>
    </component>
</protein>
<comment type="function">
    <text evidence="2 3">Catalytic subunit of the gamma-secretase complex, an endoprotease complex that catalyzes the intramembrane cleavage of integral membrane proteins such as Notch receptors and APP (amyloid-beta precursor protein). Requires the presence of the other members of the gamma-secretase complex for protease activity. Plays a role in Notch and Wnt signaling cascades and regulation of downstream processes via its role in processing key regulatory proteins, and by regulating cytosolic CTNNB1 levels. Stimulates cell-cell adhesion via its interaction with CDH1; this stabilizes the complexes between CDH1 (E-cadherin) and its interaction partners CTNNB1 (beta-catenin), CTNND1 and JUP (gamma-catenin). Under conditions of apoptosis or calcium influx, cleaves CDH1. This promotes the disassembly of the complexes between CDH1 and CTNND1, JUP and CTNNB1, increases the pool of cytoplasmic CTNNB1, and thereby negatively regulates Wnt signaling (By similarity). Required for normal embryonic brain and skeleton development, and for normal angiogenesis (By similarity). Mediates the proteolytic cleavage of EphB2/CTF1 into EphB2/CTF2 (By similarity). The holoprotein functions as a calcium-leak channel that allows the passive movement of calcium from endoplasmic reticulum to cytosol and is therefore involved in calcium homeostasis. Involved in the regulation of neurite outgrowth (By similarity). Is a regulator of presynaptic facilitation, spike transmission and synaptic vesicles replenishment in a process that depends on gamma-secretase activity. It acts through the control of SYT7 presynaptic expression (By similarity).</text>
</comment>
<comment type="subunit">
    <text evidence="2 3">Homodimer. The functional gamma-secretase complex is composed of at least four polypeptides: a presenilin homodimer (PSEN1 or PSEN2), nicastrin (NCSTN), APH1 (APH1A or APH1B) and PEN2. Such minimal complex is sufficient for secretase activity. Other components which are associated with the complex include SLC25A64, SLC5A7 and PHB. As part of the gamma-secretase complex, interacts with CRB2 (via transmembrane domain) (By similarity). Predominantly heterodimer of a N-terminal (NTF) and a C-terminal (CTF) endoproteolytical fragment. Associates with proteolytic processed C-terminal fragments C83 and C99 of the amyloid precursor protein (APP). Associates with NOTCH1. Associates with cadherin/catenin adhesion complexes through direct binding to CDH1 or CDH2. Interaction with CDH1 stabilizes the complex and stimulates cell-cell aggregation. Interaction with CDH2 is essential for trafficking of CDH2 from the endoplasmic reticulum to the plasma membrane. Interacts with CTNND2, CTNNB1, CTNND1, JUP, HERPUD1, FLNA, FLNB, MTCH1, PKP4 and PARL. Interacts through its N-terminus with GFAP (By similarity). Interacts with DOCK3 (By similarity). Interacts with UBQLN1 (By similarity).</text>
</comment>
<comment type="subcellular location">
    <subcellularLocation>
        <location evidence="2">Endoplasmic reticulum</location>
    </subcellularLocation>
    <subcellularLocation>
        <location evidence="2">Endoplasmic reticulum membrane</location>
        <topology evidence="2">Multi-pass membrane protein</topology>
    </subcellularLocation>
    <subcellularLocation>
        <location evidence="2">Golgi apparatus membrane</location>
        <topology evidence="2">Multi-pass membrane protein</topology>
    </subcellularLocation>
    <subcellularLocation>
        <location evidence="2">Cytoplasmic granule</location>
    </subcellularLocation>
    <subcellularLocation>
        <location evidence="2">Cell membrane</location>
        <topology evidence="2">Multi-pass membrane protein</topology>
    </subcellularLocation>
    <subcellularLocation>
        <location evidence="2">Cell projection</location>
        <location evidence="2">Growth cone</location>
    </subcellularLocation>
    <subcellularLocation>
        <location evidence="2">Early endosome</location>
    </subcellularLocation>
    <subcellularLocation>
        <location evidence="2">Early endosome membrane</location>
        <topology evidence="2">Multi-pass membrane protein</topology>
    </subcellularLocation>
    <subcellularLocation>
        <location evidence="2">Cell projection</location>
        <location evidence="2">Neuron projection</location>
    </subcellularLocation>
    <subcellularLocation>
        <location evidence="5">Cell projection</location>
        <location evidence="5">Axon</location>
    </subcellularLocation>
    <subcellularLocation>
        <location evidence="5">Synapse</location>
    </subcellularLocation>
    <text evidence="2">Translocates with bound NOTCH1 from the endoplasmic reticulum and/or Golgi to the cell surface. Colocalizes with CDH1/2 at sites of cell-cell contact. Colocalizes with CTNNB1 in the endoplasmic reticulum and the proximity of the plasma membrane. Also present in azurophil granules of neutrophils. Colocalizes with UBQLN1 in the cell membrane and in cytoplasmic juxtanuclear structures called aggresomes.</text>
</comment>
<comment type="alternative products">
    <event type="alternative splicing"/>
    <isoform>
        <id>Q5R780-1</id>
        <name>I-467</name>
        <sequence type="displayed"/>
    </isoform>
    <isoform>
        <id>Q5R780-2</id>
        <name>I-463</name>
        <sequence type="described" ref="VSP_018570"/>
    </isoform>
</comment>
<comment type="domain">
    <text evidence="2">The PAL motif is required for normal active site conformation.</text>
</comment>
<comment type="domain">
    <text evidence="2">Substrates, such as NOTCH1 and APP peptides, are bound between PSEN1 transmembrane domains and via the first lumenal loop and the cytoplasmic loop between the sixth and seventh transmembrane domains. Substrate binding causes a conformation change and formation of an intermolecular antiparallel beta-sheet between PSEN1 and its substrates.</text>
</comment>
<comment type="PTM">
    <text evidence="2">Heterogeneous proteolytic processing generates N-terminal (NTF) and C-terminal (CTF) fragments of approximately 35 and 20 kDa, respectively. During apoptosis, the C-terminal fragment (CTF) is further cleaved by caspase-3 to produce the fragment, PS1-CTF12.</text>
</comment>
<comment type="PTM">
    <text evidence="2">After endoproteolysis, the C-terminal fragment (CTF) is phosphorylated on serine residues by PKA and/or PKC. Phosphorylation on Ser-346 inhibits endoproteolysis.</text>
</comment>
<comment type="similarity">
    <text evidence="8">Belongs to the peptidase A22A family.</text>
</comment>
<evidence type="ECO:0000250" key="1"/>
<evidence type="ECO:0000250" key="2">
    <source>
        <dbReference type="UniProtKB" id="P49768"/>
    </source>
</evidence>
<evidence type="ECO:0000250" key="3">
    <source>
        <dbReference type="UniProtKB" id="P49769"/>
    </source>
</evidence>
<evidence type="ECO:0000250" key="4">
    <source>
        <dbReference type="UniProtKB" id="P97887"/>
    </source>
</evidence>
<evidence type="ECO:0000250" key="5">
    <source>
        <dbReference type="UniProtKB" id="Q4JIM4"/>
    </source>
</evidence>
<evidence type="ECO:0000256" key="6">
    <source>
        <dbReference type="SAM" id="MobiDB-lite"/>
    </source>
</evidence>
<evidence type="ECO:0000303" key="7">
    <source ref="1"/>
</evidence>
<evidence type="ECO:0000305" key="8"/>
<accession>Q5R780</accession>
<accession>Q5R8G8</accession>
<dbReference type="EC" id="3.4.23.-"/>
<dbReference type="EMBL" id="CR859784">
    <property type="protein sequence ID" value="CAH91942.1"/>
    <property type="molecule type" value="mRNA"/>
</dbReference>
<dbReference type="EMBL" id="CR860238">
    <property type="protein sequence ID" value="CAH92380.1"/>
    <property type="molecule type" value="mRNA"/>
</dbReference>
<dbReference type="RefSeq" id="NP_001126127.1">
    <property type="nucleotide sequence ID" value="NM_001132655.1"/>
</dbReference>
<dbReference type="SMR" id="Q5R780"/>
<dbReference type="FunCoup" id="Q5R780">
    <property type="interactions" value="2286"/>
</dbReference>
<dbReference type="STRING" id="9601.ENSPPYP00000006781"/>
<dbReference type="MEROPS" id="A22.001"/>
<dbReference type="GeneID" id="100173083"/>
<dbReference type="KEGG" id="pon:100173083"/>
<dbReference type="CTD" id="5663"/>
<dbReference type="eggNOG" id="KOG2736">
    <property type="taxonomic scope" value="Eukaryota"/>
</dbReference>
<dbReference type="InParanoid" id="Q5R780"/>
<dbReference type="OrthoDB" id="20287at2759"/>
<dbReference type="Proteomes" id="UP000001595">
    <property type="component" value="Unplaced"/>
</dbReference>
<dbReference type="GO" id="GO:0016235">
    <property type="term" value="C:aggresome"/>
    <property type="evidence" value="ECO:0000250"/>
    <property type="project" value="UniProtKB"/>
</dbReference>
<dbReference type="GO" id="GO:0031901">
    <property type="term" value="C:early endosome membrane"/>
    <property type="evidence" value="ECO:0007669"/>
    <property type="project" value="UniProtKB-SubCell"/>
</dbReference>
<dbReference type="GO" id="GO:0005783">
    <property type="term" value="C:endoplasmic reticulum"/>
    <property type="evidence" value="ECO:0000250"/>
    <property type="project" value="UniProtKB"/>
</dbReference>
<dbReference type="GO" id="GO:0005789">
    <property type="term" value="C:endoplasmic reticulum membrane"/>
    <property type="evidence" value="ECO:0007669"/>
    <property type="project" value="UniProtKB-SubCell"/>
</dbReference>
<dbReference type="GO" id="GO:0070765">
    <property type="term" value="C:gamma-secretase complex"/>
    <property type="evidence" value="ECO:0000250"/>
    <property type="project" value="UniProtKB"/>
</dbReference>
<dbReference type="GO" id="GO:0005794">
    <property type="term" value="C:Golgi apparatus"/>
    <property type="evidence" value="ECO:0000250"/>
    <property type="project" value="UniProtKB"/>
</dbReference>
<dbReference type="GO" id="GO:0000139">
    <property type="term" value="C:Golgi membrane"/>
    <property type="evidence" value="ECO:0007669"/>
    <property type="project" value="UniProtKB-SubCell"/>
</dbReference>
<dbReference type="GO" id="GO:0030426">
    <property type="term" value="C:growth cone"/>
    <property type="evidence" value="ECO:0000250"/>
    <property type="project" value="UniProtKB"/>
</dbReference>
<dbReference type="GO" id="GO:0016020">
    <property type="term" value="C:membrane"/>
    <property type="evidence" value="ECO:0000250"/>
    <property type="project" value="UniProtKB"/>
</dbReference>
<dbReference type="GO" id="GO:0005739">
    <property type="term" value="C:mitochondrion"/>
    <property type="evidence" value="ECO:0000250"/>
    <property type="project" value="UniProtKB"/>
</dbReference>
<dbReference type="GO" id="GO:0043005">
    <property type="term" value="C:neuron projection"/>
    <property type="evidence" value="ECO:0000250"/>
    <property type="project" value="UniProtKB"/>
</dbReference>
<dbReference type="GO" id="GO:0005886">
    <property type="term" value="C:plasma membrane"/>
    <property type="evidence" value="ECO:0000250"/>
    <property type="project" value="UniProtKB"/>
</dbReference>
<dbReference type="GO" id="GO:0045202">
    <property type="term" value="C:synapse"/>
    <property type="evidence" value="ECO:0007669"/>
    <property type="project" value="UniProtKB-SubCell"/>
</dbReference>
<dbReference type="GO" id="GO:0042500">
    <property type="term" value="F:aspartic endopeptidase activity, intramembrane cleaving"/>
    <property type="evidence" value="ECO:0000250"/>
    <property type="project" value="UniProtKB"/>
</dbReference>
<dbReference type="GO" id="GO:0042982">
    <property type="term" value="P:amyloid precursor protein metabolic process"/>
    <property type="evidence" value="ECO:0000250"/>
    <property type="project" value="UniProtKB"/>
</dbReference>
<dbReference type="GO" id="GO:0034205">
    <property type="term" value="P:amyloid-beta formation"/>
    <property type="evidence" value="ECO:0000250"/>
    <property type="project" value="UniProtKB"/>
</dbReference>
<dbReference type="GO" id="GO:0006915">
    <property type="term" value="P:apoptotic process"/>
    <property type="evidence" value="ECO:0007669"/>
    <property type="project" value="UniProtKB-KW"/>
</dbReference>
<dbReference type="GO" id="GO:0007155">
    <property type="term" value="P:cell adhesion"/>
    <property type="evidence" value="ECO:0007669"/>
    <property type="project" value="UniProtKB-KW"/>
</dbReference>
<dbReference type="GO" id="GO:0032469">
    <property type="term" value="P:endoplasmic reticulum calcium ion homeostasis"/>
    <property type="evidence" value="ECO:0000250"/>
    <property type="project" value="UniProtKB"/>
</dbReference>
<dbReference type="GO" id="GO:0035556">
    <property type="term" value="P:intracellular signal transduction"/>
    <property type="evidence" value="ECO:0007669"/>
    <property type="project" value="InterPro"/>
</dbReference>
<dbReference type="GO" id="GO:0006509">
    <property type="term" value="P:membrane protein ectodomain proteolysis"/>
    <property type="evidence" value="ECO:0000250"/>
    <property type="project" value="UniProtKB"/>
</dbReference>
<dbReference type="GO" id="GO:0007219">
    <property type="term" value="P:Notch signaling pathway"/>
    <property type="evidence" value="ECO:0007669"/>
    <property type="project" value="UniProtKB-KW"/>
</dbReference>
<dbReference type="GO" id="GO:0016485">
    <property type="term" value="P:protein processing"/>
    <property type="evidence" value="ECO:0000250"/>
    <property type="project" value="UniProtKB"/>
</dbReference>
<dbReference type="GO" id="GO:0060828">
    <property type="term" value="P:regulation of canonical Wnt signaling pathway"/>
    <property type="evidence" value="ECO:0000250"/>
    <property type="project" value="UniProtKB"/>
</dbReference>
<dbReference type="GO" id="GO:0010975">
    <property type="term" value="P:regulation of neuron projection development"/>
    <property type="evidence" value="ECO:0000250"/>
    <property type="project" value="UniProtKB"/>
</dbReference>
<dbReference type="FunFam" id="1.10.472.100:FF:000001">
    <property type="entry name" value="Presenilin"/>
    <property type="match status" value="1"/>
</dbReference>
<dbReference type="Gene3D" id="1.10.472.100">
    <property type="entry name" value="Presenilin"/>
    <property type="match status" value="1"/>
</dbReference>
<dbReference type="InterPro" id="IPR002031">
    <property type="entry name" value="Pept_A22A_PS1"/>
</dbReference>
<dbReference type="InterPro" id="IPR001108">
    <property type="entry name" value="Peptidase_A22A"/>
</dbReference>
<dbReference type="InterPro" id="IPR006639">
    <property type="entry name" value="Preselin/SPP"/>
</dbReference>
<dbReference type="InterPro" id="IPR042524">
    <property type="entry name" value="Presenilin_C"/>
</dbReference>
<dbReference type="PANTHER" id="PTHR10202">
    <property type="entry name" value="PRESENILIN"/>
    <property type="match status" value="1"/>
</dbReference>
<dbReference type="PANTHER" id="PTHR10202:SF18">
    <property type="entry name" value="PRESENILIN-1"/>
    <property type="match status" value="1"/>
</dbReference>
<dbReference type="Pfam" id="PF01080">
    <property type="entry name" value="Presenilin"/>
    <property type="match status" value="1"/>
</dbReference>
<dbReference type="PRINTS" id="PR01072">
    <property type="entry name" value="PRESENILIN"/>
</dbReference>
<dbReference type="PRINTS" id="PR01073">
    <property type="entry name" value="PRESENILIN1"/>
</dbReference>
<dbReference type="SMART" id="SM00730">
    <property type="entry name" value="PSN"/>
    <property type="match status" value="1"/>
</dbReference>
<proteinExistence type="evidence at transcript level"/>
<sequence>MTELPAPLSYFQNAQMSEDNHLSNTVRSQNDNRERQEHNDRRSLGHPEPLSNGRPQGSSRQVVEQDEEEDEELTLKYGAKHVIMLFVPVTLCMVVVVATIKSVSFYTRKDGQLIYTPFTEDTETVGQRALHSILNAAIMISVIVVMTILLVVLYKYRCYKVIHAWLIISSLLLLFFFSFIYLGEVFKTYNVAVDYITVALLIWNFGVVGMISIHWKGPLRLQQAYLIMISALMALVFIKYLPEWTAWLILAVISVYDLVAVLCPKGPLRMLVETAQERNETLFPALIYSSTMVWLVNMAEGGPEAQRRVSKNSKYNAESTERESQDTVAENDDGGFSEEWEAQRDSHLGPHRSTPESRAAVQELSSSILAGEDPEERGVKLGLGDFIFYSVLVGKASATASGDWNTTIACFVAILIGLCLTLLLLAIFKKALPALPISITFGLVFYFATDYLVQPFMDQLAFHQFYI</sequence>
<gene>
    <name type="primary">PSEN1</name>
</gene>